<accession>C3K332</accession>
<reference key="1">
    <citation type="journal article" date="2009" name="Genome Biol.">
        <title>Genomic and genetic analyses of diversity and plant interactions of Pseudomonas fluorescens.</title>
        <authorList>
            <person name="Silby M.W."/>
            <person name="Cerdeno-Tarraga A.M."/>
            <person name="Vernikos G.S."/>
            <person name="Giddens S.R."/>
            <person name="Jackson R.W."/>
            <person name="Preston G.M."/>
            <person name="Zhang X.-X."/>
            <person name="Moon C.D."/>
            <person name="Gehrig S.M."/>
            <person name="Godfrey S.A.C."/>
            <person name="Knight C.G."/>
            <person name="Malone J.G."/>
            <person name="Robinson Z."/>
            <person name="Spiers A.J."/>
            <person name="Harris S."/>
            <person name="Challis G.L."/>
            <person name="Yaxley A.M."/>
            <person name="Harris D."/>
            <person name="Seeger K."/>
            <person name="Murphy L."/>
            <person name="Rutter S."/>
            <person name="Squares R."/>
            <person name="Quail M.A."/>
            <person name="Saunders E."/>
            <person name="Mavromatis K."/>
            <person name="Brettin T.S."/>
            <person name="Bentley S.D."/>
            <person name="Hothersall J."/>
            <person name="Stephens E."/>
            <person name="Thomas C.M."/>
            <person name="Parkhill J."/>
            <person name="Levy S.B."/>
            <person name="Rainey P.B."/>
            <person name="Thomson N.R."/>
        </authorList>
    </citation>
    <scope>NUCLEOTIDE SEQUENCE [LARGE SCALE GENOMIC DNA]</scope>
    <source>
        <strain>SBW25</strain>
    </source>
</reference>
<sequence length="423" mass="48636">MSYVIDRRLNGKNKSTVNRQRFLRRYRDHIKKAVEEAVSRRSITDMEHGEQISIPGRDIDEPVLHHGRGGKQTVVHPGNKEFTTGEHIQRPQGGGGGKGPGKAGNSGEGMDEFVFQITQEEFLEFMFEDLELPNLVKRNLTGTDTFKTVRAGISNEGNPSRINIIRTLRSAHARRIALSGSSRAKLRDAKEELARLKREEPDNFGDIQEIEAEIEKLSARIHRVPFLDTFDLKYNLLVKQPNPSSKAVMFCLMDVSGSMTQATKDIAKRFFILLYLFLKRNYDKIDVVFIRHHTSAREVDEEEFFYSRETGGTIVSSALKLMQEIMAERYPANEWNIYAAQASDGDNWNDDSPICRDILINQIMPFVQYYTYVEITPREHQALWFEYERIGEAFADTFAQQQLVSAGDIYPVFRELFQRRLVT</sequence>
<organism>
    <name type="scientific">Pseudomonas fluorescens (strain SBW25)</name>
    <dbReference type="NCBI Taxonomy" id="216595"/>
    <lineage>
        <taxon>Bacteria</taxon>
        <taxon>Pseudomonadati</taxon>
        <taxon>Pseudomonadota</taxon>
        <taxon>Gammaproteobacteria</taxon>
        <taxon>Pseudomonadales</taxon>
        <taxon>Pseudomonadaceae</taxon>
        <taxon>Pseudomonas</taxon>
    </lineage>
</organism>
<protein>
    <recommendedName>
        <fullName evidence="1">UPF0229 protein PFLU_5583</fullName>
    </recommendedName>
</protein>
<gene>
    <name type="ordered locus">PFLU_5583</name>
</gene>
<dbReference type="EMBL" id="AM181176">
    <property type="protein sequence ID" value="CAY52857.1"/>
    <property type="molecule type" value="Genomic_DNA"/>
</dbReference>
<dbReference type="RefSeq" id="WP_015886179.1">
    <property type="nucleotide sequence ID" value="NC_012660.1"/>
</dbReference>
<dbReference type="SMR" id="C3K332"/>
<dbReference type="STRING" id="294.SRM1_05243"/>
<dbReference type="eggNOG" id="COG2718">
    <property type="taxonomic scope" value="Bacteria"/>
</dbReference>
<dbReference type="HOGENOM" id="CLU_049702_0_0_6"/>
<dbReference type="OrthoDB" id="9788289at2"/>
<dbReference type="HAMAP" id="MF_01232">
    <property type="entry name" value="UPF0229"/>
    <property type="match status" value="1"/>
</dbReference>
<dbReference type="InterPro" id="IPR006698">
    <property type="entry name" value="UPF0229"/>
</dbReference>
<dbReference type="NCBIfam" id="NF003707">
    <property type="entry name" value="PRK05325.1-2"/>
    <property type="match status" value="1"/>
</dbReference>
<dbReference type="NCBIfam" id="NF003708">
    <property type="entry name" value="PRK05325.1-3"/>
    <property type="match status" value="1"/>
</dbReference>
<dbReference type="PANTHER" id="PTHR30510">
    <property type="entry name" value="UPF0229 PROTEIN YEAH"/>
    <property type="match status" value="1"/>
</dbReference>
<dbReference type="PANTHER" id="PTHR30510:SF2">
    <property type="entry name" value="UPF0229 PROTEIN YEAH"/>
    <property type="match status" value="1"/>
</dbReference>
<dbReference type="Pfam" id="PF04285">
    <property type="entry name" value="DUF444"/>
    <property type="match status" value="1"/>
</dbReference>
<comment type="similarity">
    <text evidence="1">Belongs to the UPF0229 family.</text>
</comment>
<proteinExistence type="inferred from homology"/>
<name>Y5583_PSEFS</name>
<feature type="chain" id="PRO_1000214029" description="UPF0229 protein PFLU_5583">
    <location>
        <begin position="1"/>
        <end position="423"/>
    </location>
</feature>
<feature type="region of interest" description="Disordered" evidence="2">
    <location>
        <begin position="64"/>
        <end position="109"/>
    </location>
</feature>
<feature type="compositionally biased region" description="Gly residues" evidence="2">
    <location>
        <begin position="92"/>
        <end position="107"/>
    </location>
</feature>
<evidence type="ECO:0000255" key="1">
    <source>
        <dbReference type="HAMAP-Rule" id="MF_01232"/>
    </source>
</evidence>
<evidence type="ECO:0000256" key="2">
    <source>
        <dbReference type="SAM" id="MobiDB-lite"/>
    </source>
</evidence>